<gene>
    <name evidence="1" type="primary">add</name>
    <name type="ordered locus">SeHA_C1633</name>
</gene>
<dbReference type="EC" id="3.5.4.4" evidence="1"/>
<dbReference type="EMBL" id="CP001120">
    <property type="protein sequence ID" value="ACF66908.1"/>
    <property type="molecule type" value="Genomic_DNA"/>
</dbReference>
<dbReference type="RefSeq" id="WP_000565565.1">
    <property type="nucleotide sequence ID" value="NC_011083.1"/>
</dbReference>
<dbReference type="SMR" id="B4THP5"/>
<dbReference type="KEGG" id="seh:SeHA_C1633"/>
<dbReference type="HOGENOM" id="CLU_039228_0_2_6"/>
<dbReference type="Proteomes" id="UP000001866">
    <property type="component" value="Chromosome"/>
</dbReference>
<dbReference type="GO" id="GO:0005829">
    <property type="term" value="C:cytosol"/>
    <property type="evidence" value="ECO:0007669"/>
    <property type="project" value="TreeGrafter"/>
</dbReference>
<dbReference type="GO" id="GO:0046936">
    <property type="term" value="F:2'-deoxyadenosine deaminase activity"/>
    <property type="evidence" value="ECO:0007669"/>
    <property type="project" value="RHEA"/>
</dbReference>
<dbReference type="GO" id="GO:0004000">
    <property type="term" value="F:adenosine deaminase activity"/>
    <property type="evidence" value="ECO:0007669"/>
    <property type="project" value="UniProtKB-UniRule"/>
</dbReference>
<dbReference type="GO" id="GO:0008270">
    <property type="term" value="F:zinc ion binding"/>
    <property type="evidence" value="ECO:0007669"/>
    <property type="project" value="UniProtKB-UniRule"/>
</dbReference>
<dbReference type="GO" id="GO:0006154">
    <property type="term" value="P:adenosine catabolic process"/>
    <property type="evidence" value="ECO:0007669"/>
    <property type="project" value="TreeGrafter"/>
</dbReference>
<dbReference type="GO" id="GO:0043103">
    <property type="term" value="P:hypoxanthine salvage"/>
    <property type="evidence" value="ECO:0007669"/>
    <property type="project" value="TreeGrafter"/>
</dbReference>
<dbReference type="GO" id="GO:0046103">
    <property type="term" value="P:inosine biosynthetic process"/>
    <property type="evidence" value="ECO:0007669"/>
    <property type="project" value="TreeGrafter"/>
</dbReference>
<dbReference type="GO" id="GO:0009117">
    <property type="term" value="P:nucleotide metabolic process"/>
    <property type="evidence" value="ECO:0007669"/>
    <property type="project" value="UniProtKB-KW"/>
</dbReference>
<dbReference type="GO" id="GO:0009168">
    <property type="term" value="P:purine ribonucleoside monophosphate biosynthetic process"/>
    <property type="evidence" value="ECO:0007669"/>
    <property type="project" value="UniProtKB-UniRule"/>
</dbReference>
<dbReference type="CDD" id="cd01320">
    <property type="entry name" value="ADA"/>
    <property type="match status" value="1"/>
</dbReference>
<dbReference type="FunFam" id="3.20.20.140:FF:000009">
    <property type="entry name" value="Adenosine deaminase"/>
    <property type="match status" value="1"/>
</dbReference>
<dbReference type="Gene3D" id="3.20.20.140">
    <property type="entry name" value="Metal-dependent hydrolases"/>
    <property type="match status" value="1"/>
</dbReference>
<dbReference type="HAMAP" id="MF_00540">
    <property type="entry name" value="A_deaminase"/>
    <property type="match status" value="1"/>
</dbReference>
<dbReference type="InterPro" id="IPR006650">
    <property type="entry name" value="A/AMP_deam_AS"/>
</dbReference>
<dbReference type="InterPro" id="IPR028893">
    <property type="entry name" value="A_deaminase"/>
</dbReference>
<dbReference type="InterPro" id="IPR001365">
    <property type="entry name" value="A_deaminase_dom"/>
</dbReference>
<dbReference type="InterPro" id="IPR006330">
    <property type="entry name" value="Ado/ade_deaminase"/>
</dbReference>
<dbReference type="InterPro" id="IPR032466">
    <property type="entry name" value="Metal_Hydrolase"/>
</dbReference>
<dbReference type="NCBIfam" id="TIGR01430">
    <property type="entry name" value="aden_deam"/>
    <property type="match status" value="1"/>
</dbReference>
<dbReference type="NCBIfam" id="NF006846">
    <property type="entry name" value="PRK09358.1-1"/>
    <property type="match status" value="1"/>
</dbReference>
<dbReference type="PANTHER" id="PTHR11409">
    <property type="entry name" value="ADENOSINE DEAMINASE"/>
    <property type="match status" value="1"/>
</dbReference>
<dbReference type="PANTHER" id="PTHR11409:SF43">
    <property type="entry name" value="ADENOSINE DEAMINASE"/>
    <property type="match status" value="1"/>
</dbReference>
<dbReference type="Pfam" id="PF00962">
    <property type="entry name" value="A_deaminase"/>
    <property type="match status" value="1"/>
</dbReference>
<dbReference type="SUPFAM" id="SSF51556">
    <property type="entry name" value="Metallo-dependent hydrolases"/>
    <property type="match status" value="1"/>
</dbReference>
<dbReference type="PROSITE" id="PS00485">
    <property type="entry name" value="A_DEAMINASE"/>
    <property type="match status" value="1"/>
</dbReference>
<accession>B4THP5</accession>
<name>ADD_SALHS</name>
<comment type="function">
    <text evidence="1">Catalyzes the hydrolytic deamination of adenosine and 2-deoxyadenosine.</text>
</comment>
<comment type="catalytic activity">
    <reaction evidence="1">
        <text>adenosine + H2O + H(+) = inosine + NH4(+)</text>
        <dbReference type="Rhea" id="RHEA:24408"/>
        <dbReference type="ChEBI" id="CHEBI:15377"/>
        <dbReference type="ChEBI" id="CHEBI:15378"/>
        <dbReference type="ChEBI" id="CHEBI:16335"/>
        <dbReference type="ChEBI" id="CHEBI:17596"/>
        <dbReference type="ChEBI" id="CHEBI:28938"/>
        <dbReference type="EC" id="3.5.4.4"/>
    </reaction>
    <physiologicalReaction direction="left-to-right" evidence="1">
        <dbReference type="Rhea" id="RHEA:24409"/>
    </physiologicalReaction>
</comment>
<comment type="catalytic activity">
    <reaction evidence="1">
        <text>2'-deoxyadenosine + H2O + H(+) = 2'-deoxyinosine + NH4(+)</text>
        <dbReference type="Rhea" id="RHEA:28190"/>
        <dbReference type="ChEBI" id="CHEBI:15377"/>
        <dbReference type="ChEBI" id="CHEBI:15378"/>
        <dbReference type="ChEBI" id="CHEBI:17256"/>
        <dbReference type="ChEBI" id="CHEBI:28938"/>
        <dbReference type="ChEBI" id="CHEBI:28997"/>
        <dbReference type="EC" id="3.5.4.4"/>
    </reaction>
    <physiologicalReaction direction="left-to-right" evidence="1">
        <dbReference type="Rhea" id="RHEA:28191"/>
    </physiologicalReaction>
</comment>
<comment type="cofactor">
    <cofactor evidence="1">
        <name>Zn(2+)</name>
        <dbReference type="ChEBI" id="CHEBI:29105"/>
    </cofactor>
    <text evidence="1">Binds 1 zinc ion per subunit.</text>
</comment>
<comment type="similarity">
    <text evidence="1">Belongs to the metallo-dependent hydrolases superfamily. Adenosine and AMP deaminases family. Adenosine deaminase subfamily.</text>
</comment>
<evidence type="ECO:0000255" key="1">
    <source>
        <dbReference type="HAMAP-Rule" id="MF_00540"/>
    </source>
</evidence>
<reference key="1">
    <citation type="journal article" date="2011" name="J. Bacteriol.">
        <title>Comparative genomics of 28 Salmonella enterica isolates: evidence for CRISPR-mediated adaptive sublineage evolution.</title>
        <authorList>
            <person name="Fricke W.F."/>
            <person name="Mammel M.K."/>
            <person name="McDermott P.F."/>
            <person name="Tartera C."/>
            <person name="White D.G."/>
            <person name="Leclerc J.E."/>
            <person name="Ravel J."/>
            <person name="Cebula T.A."/>
        </authorList>
    </citation>
    <scope>NUCLEOTIDE SEQUENCE [LARGE SCALE GENOMIC DNA]</scope>
    <source>
        <strain>SL476</strain>
    </source>
</reference>
<organism>
    <name type="scientific">Salmonella heidelberg (strain SL476)</name>
    <dbReference type="NCBI Taxonomy" id="454169"/>
    <lineage>
        <taxon>Bacteria</taxon>
        <taxon>Pseudomonadati</taxon>
        <taxon>Pseudomonadota</taxon>
        <taxon>Gammaproteobacteria</taxon>
        <taxon>Enterobacterales</taxon>
        <taxon>Enterobacteriaceae</taxon>
        <taxon>Salmonella</taxon>
    </lineage>
</organism>
<keyword id="KW-0378">Hydrolase</keyword>
<keyword id="KW-0479">Metal-binding</keyword>
<keyword id="KW-0546">Nucleotide metabolism</keyword>
<keyword id="KW-0862">Zinc</keyword>
<protein>
    <recommendedName>
        <fullName evidence="1">Adenosine deaminase</fullName>
        <ecNumber evidence="1">3.5.4.4</ecNumber>
    </recommendedName>
    <alternativeName>
        <fullName evidence="1">Adenosine aminohydrolase</fullName>
    </alternativeName>
</protein>
<proteinExistence type="inferred from homology"/>
<sequence>MIDITLPLTDIHRHLDGNIRAQTILDLGRQFNIALPAQTLETLIPHVQVTSTEPDLVSFLTKLDWGVKVLASLDACRRVAFENIEDAARNGLHYVELRFSPGYMAMAHQLPIAGVVEAVIDGVRDGCNTFGVEARLIGIMSRTFGEAACLQELDALLAHREKITALDLAGDELGFPGSLFLSHFNRARDAGWHITVHAGEAAGPESIWQAIRELGAERIGHGVKAVEDRALMDFLAQQRIGIESCLTSNIQTSTVASLADHPLKTFLEHGVLASLNTDDPAVQGVDIIHEYHVAAPAAGLSREQIRQAQINGLEIAFLSDGEKRALREKVAAA</sequence>
<feature type="chain" id="PRO_1000128864" description="Adenosine deaminase">
    <location>
        <begin position="1"/>
        <end position="333"/>
    </location>
</feature>
<feature type="active site" description="Proton donor" evidence="1">
    <location>
        <position position="200"/>
    </location>
</feature>
<feature type="binding site" evidence="1">
    <location>
        <position position="12"/>
    </location>
    <ligand>
        <name>Zn(2+)</name>
        <dbReference type="ChEBI" id="CHEBI:29105"/>
        <note>catalytic</note>
    </ligand>
</feature>
<feature type="binding site" evidence="1">
    <location>
        <position position="14"/>
    </location>
    <ligand>
        <name>substrate</name>
    </ligand>
</feature>
<feature type="binding site" evidence="1">
    <location>
        <position position="14"/>
    </location>
    <ligand>
        <name>Zn(2+)</name>
        <dbReference type="ChEBI" id="CHEBI:29105"/>
        <note>catalytic</note>
    </ligand>
</feature>
<feature type="binding site" evidence="1">
    <location>
        <position position="16"/>
    </location>
    <ligand>
        <name>substrate</name>
    </ligand>
</feature>
<feature type="binding site" evidence="1">
    <location>
        <position position="170"/>
    </location>
    <ligand>
        <name>substrate</name>
    </ligand>
</feature>
<feature type="binding site" evidence="1">
    <location>
        <position position="197"/>
    </location>
    <ligand>
        <name>Zn(2+)</name>
        <dbReference type="ChEBI" id="CHEBI:29105"/>
        <note>catalytic</note>
    </ligand>
</feature>
<feature type="binding site" evidence="1">
    <location>
        <position position="278"/>
    </location>
    <ligand>
        <name>Zn(2+)</name>
        <dbReference type="ChEBI" id="CHEBI:29105"/>
        <note>catalytic</note>
    </ligand>
</feature>
<feature type="binding site" evidence="1">
    <location>
        <position position="279"/>
    </location>
    <ligand>
        <name>substrate</name>
    </ligand>
</feature>
<feature type="site" description="Important for catalytic activity" evidence="1">
    <location>
        <position position="221"/>
    </location>
</feature>